<dbReference type="EMBL" id="AACD01000109">
    <property type="protein sequence ID" value="EAA57896.1"/>
    <property type="status" value="ALT_SEQ"/>
    <property type="molecule type" value="Genomic_DNA"/>
</dbReference>
<dbReference type="EMBL" id="BN001301">
    <property type="protein sequence ID" value="CBF70979.1"/>
    <property type="status" value="ALT_SEQ"/>
    <property type="molecule type" value="Genomic_DNA"/>
</dbReference>
<dbReference type="RefSeq" id="XP_664160.1">
    <property type="nucleotide sequence ID" value="XM_659068.1"/>
</dbReference>
<dbReference type="SMR" id="Q5AYS4"/>
<dbReference type="FunCoup" id="Q5AYS4">
    <property type="interactions" value="325"/>
</dbReference>
<dbReference type="STRING" id="227321.Q5AYS4"/>
<dbReference type="KEGG" id="ani:ANIA_06556"/>
<dbReference type="VEuPathDB" id="FungiDB:AN6556"/>
<dbReference type="eggNOG" id="ENOG502RY6R">
    <property type="taxonomic scope" value="Eukaryota"/>
</dbReference>
<dbReference type="HOGENOM" id="CLU_096593_0_0_1"/>
<dbReference type="InParanoid" id="Q5AYS4"/>
<dbReference type="OrthoDB" id="1743802at2759"/>
<dbReference type="Proteomes" id="UP000000560">
    <property type="component" value="Chromosome I"/>
</dbReference>
<dbReference type="GO" id="GO:0005730">
    <property type="term" value="C:nucleolus"/>
    <property type="evidence" value="ECO:0000318"/>
    <property type="project" value="GO_Central"/>
</dbReference>
<dbReference type="GO" id="GO:0030687">
    <property type="term" value="C:preribosome, large subunit precursor"/>
    <property type="evidence" value="ECO:0000318"/>
    <property type="project" value="GO_Central"/>
</dbReference>
<dbReference type="GO" id="GO:0003729">
    <property type="term" value="F:mRNA binding"/>
    <property type="evidence" value="ECO:0000318"/>
    <property type="project" value="GO_Central"/>
</dbReference>
<dbReference type="GO" id="GO:0008298">
    <property type="term" value="P:intracellular mRNA localization"/>
    <property type="evidence" value="ECO:0000318"/>
    <property type="project" value="GO_Central"/>
</dbReference>
<dbReference type="GO" id="GO:0051028">
    <property type="term" value="P:mRNA transport"/>
    <property type="evidence" value="ECO:0007669"/>
    <property type="project" value="UniProtKB-KW"/>
</dbReference>
<dbReference type="GO" id="GO:0042273">
    <property type="term" value="P:ribosomal large subunit biogenesis"/>
    <property type="evidence" value="ECO:0000318"/>
    <property type="project" value="GO_Central"/>
</dbReference>
<dbReference type="InterPro" id="IPR037650">
    <property type="entry name" value="Loc1"/>
</dbReference>
<dbReference type="PANTHER" id="PTHR28028">
    <property type="entry name" value="60S RIBOSOMAL SUBUNIT ASSEMBLY/EXPORT PROTEIN LOC1"/>
    <property type="match status" value="1"/>
</dbReference>
<dbReference type="PANTHER" id="PTHR28028:SF1">
    <property type="entry name" value="60S RIBOSOMAL SUBUNIT ASSEMBLY_EXPORT PROTEIN LOC1"/>
    <property type="match status" value="1"/>
</dbReference>
<accession>Q5AYS4</accession>
<accession>C8V0T9</accession>
<keyword id="KW-0175">Coiled coil</keyword>
<keyword id="KW-0509">mRNA transport</keyword>
<keyword id="KW-0539">Nucleus</keyword>
<keyword id="KW-1185">Reference proteome</keyword>
<keyword id="KW-0690">Ribosome biogenesis</keyword>
<keyword id="KW-0813">Transport</keyword>
<organism>
    <name type="scientific">Emericella nidulans (strain FGSC A4 / ATCC 38163 / CBS 112.46 / NRRL 194 / M139)</name>
    <name type="common">Aspergillus nidulans</name>
    <dbReference type="NCBI Taxonomy" id="227321"/>
    <lineage>
        <taxon>Eukaryota</taxon>
        <taxon>Fungi</taxon>
        <taxon>Dikarya</taxon>
        <taxon>Ascomycota</taxon>
        <taxon>Pezizomycotina</taxon>
        <taxon>Eurotiomycetes</taxon>
        <taxon>Eurotiomycetidae</taxon>
        <taxon>Eurotiales</taxon>
        <taxon>Aspergillaceae</taxon>
        <taxon>Aspergillus</taxon>
        <taxon>Aspergillus subgen. Nidulantes</taxon>
    </lineage>
</organism>
<gene>
    <name type="primary">loc1</name>
    <name type="ORF">AN6556</name>
</gene>
<name>LOC1_EMENI</name>
<protein>
    <recommendedName>
        <fullName>60S ribosomal subunit assembly/export protein loc1</fullName>
    </recommendedName>
</protein>
<evidence type="ECO:0000250" key="1"/>
<evidence type="ECO:0000255" key="2"/>
<evidence type="ECO:0000256" key="3">
    <source>
        <dbReference type="SAM" id="MobiDB-lite"/>
    </source>
</evidence>
<evidence type="ECO:0000305" key="4"/>
<sequence length="188" mass="20723">MAPTTKGAKGKTSAKGESKNNKVLGSKVSKKNVKRPPPKEVKSKARTEQSQLKKTKKREYSEAELDLPKLNMITPVGVVNPKGKKKGKTFCDDPEAMMTIFAMVNAEKEGQIESKIMKARQLEEIREAKRKEAEARQSEKKNKLENAKESIRQSRKHKGGASSAKSNKAETESPKPKSGGKKKSVAFA</sequence>
<reference key="1">
    <citation type="journal article" date="2005" name="Nature">
        <title>Sequencing of Aspergillus nidulans and comparative analysis with A. fumigatus and A. oryzae.</title>
        <authorList>
            <person name="Galagan J.E."/>
            <person name="Calvo S.E."/>
            <person name="Cuomo C."/>
            <person name="Ma L.-J."/>
            <person name="Wortman J.R."/>
            <person name="Batzoglou S."/>
            <person name="Lee S.-I."/>
            <person name="Bastuerkmen M."/>
            <person name="Spevak C.C."/>
            <person name="Clutterbuck J."/>
            <person name="Kapitonov V."/>
            <person name="Jurka J."/>
            <person name="Scazzocchio C."/>
            <person name="Farman M.L."/>
            <person name="Butler J."/>
            <person name="Purcell S."/>
            <person name="Harris S."/>
            <person name="Braus G.H."/>
            <person name="Draht O."/>
            <person name="Busch S."/>
            <person name="D'Enfert C."/>
            <person name="Bouchier C."/>
            <person name="Goldman G.H."/>
            <person name="Bell-Pedersen D."/>
            <person name="Griffiths-Jones S."/>
            <person name="Doonan J.H."/>
            <person name="Yu J."/>
            <person name="Vienken K."/>
            <person name="Pain A."/>
            <person name="Freitag M."/>
            <person name="Selker E.U."/>
            <person name="Archer D.B."/>
            <person name="Penalva M.A."/>
            <person name="Oakley B.R."/>
            <person name="Momany M."/>
            <person name="Tanaka T."/>
            <person name="Kumagai T."/>
            <person name="Asai K."/>
            <person name="Machida M."/>
            <person name="Nierman W.C."/>
            <person name="Denning D.W."/>
            <person name="Caddick M.X."/>
            <person name="Hynes M."/>
            <person name="Paoletti M."/>
            <person name="Fischer R."/>
            <person name="Miller B.L."/>
            <person name="Dyer P.S."/>
            <person name="Sachs M.S."/>
            <person name="Osmani S.A."/>
            <person name="Birren B.W."/>
        </authorList>
    </citation>
    <scope>NUCLEOTIDE SEQUENCE [LARGE SCALE GENOMIC DNA]</scope>
    <source>
        <strain>FGSC A4 / ATCC 38163 / CBS 112.46 / NRRL 194 / M139</strain>
    </source>
</reference>
<reference key="2">
    <citation type="journal article" date="2009" name="Fungal Genet. Biol.">
        <title>The 2008 update of the Aspergillus nidulans genome annotation: a community effort.</title>
        <authorList>
            <person name="Wortman J.R."/>
            <person name="Gilsenan J.M."/>
            <person name="Joardar V."/>
            <person name="Deegan J."/>
            <person name="Clutterbuck J."/>
            <person name="Andersen M.R."/>
            <person name="Archer D."/>
            <person name="Bencina M."/>
            <person name="Braus G."/>
            <person name="Coutinho P."/>
            <person name="von Dohren H."/>
            <person name="Doonan J."/>
            <person name="Driessen A.J."/>
            <person name="Durek P."/>
            <person name="Espeso E."/>
            <person name="Fekete E."/>
            <person name="Flipphi M."/>
            <person name="Estrada C.G."/>
            <person name="Geysens S."/>
            <person name="Goldman G."/>
            <person name="de Groot P.W."/>
            <person name="Hansen K."/>
            <person name="Harris S.D."/>
            <person name="Heinekamp T."/>
            <person name="Helmstaedt K."/>
            <person name="Henrissat B."/>
            <person name="Hofmann G."/>
            <person name="Homan T."/>
            <person name="Horio T."/>
            <person name="Horiuchi H."/>
            <person name="James S."/>
            <person name="Jones M."/>
            <person name="Karaffa L."/>
            <person name="Karanyi Z."/>
            <person name="Kato M."/>
            <person name="Keller N."/>
            <person name="Kelly D.E."/>
            <person name="Kiel J.A."/>
            <person name="Kim J.M."/>
            <person name="van der Klei I.J."/>
            <person name="Klis F.M."/>
            <person name="Kovalchuk A."/>
            <person name="Krasevec N."/>
            <person name="Kubicek C.P."/>
            <person name="Liu B."/>
            <person name="Maccabe A."/>
            <person name="Meyer V."/>
            <person name="Mirabito P."/>
            <person name="Miskei M."/>
            <person name="Mos M."/>
            <person name="Mullins J."/>
            <person name="Nelson D.R."/>
            <person name="Nielsen J."/>
            <person name="Oakley B.R."/>
            <person name="Osmani S.A."/>
            <person name="Pakula T."/>
            <person name="Paszewski A."/>
            <person name="Paulsen I."/>
            <person name="Pilsyk S."/>
            <person name="Pocsi I."/>
            <person name="Punt P.J."/>
            <person name="Ram A.F."/>
            <person name="Ren Q."/>
            <person name="Robellet X."/>
            <person name="Robson G."/>
            <person name="Seiboth B."/>
            <person name="van Solingen P."/>
            <person name="Specht T."/>
            <person name="Sun J."/>
            <person name="Taheri-Talesh N."/>
            <person name="Takeshita N."/>
            <person name="Ussery D."/>
            <person name="vanKuyk P.A."/>
            <person name="Visser H."/>
            <person name="van de Vondervoort P.J."/>
            <person name="de Vries R.P."/>
            <person name="Walton J."/>
            <person name="Xiang X."/>
            <person name="Xiong Y."/>
            <person name="Zeng A.P."/>
            <person name="Brandt B.W."/>
            <person name="Cornell M.J."/>
            <person name="van den Hondel C.A."/>
            <person name="Visser J."/>
            <person name="Oliver S.G."/>
            <person name="Turner G."/>
        </authorList>
    </citation>
    <scope>GENOME REANNOTATION</scope>
    <source>
        <strain>FGSC A4 / ATCC 38163 / CBS 112.46 / NRRL 194 / M139</strain>
    </source>
</reference>
<feature type="chain" id="PRO_0000308794" description="60S ribosomal subunit assembly/export protein loc1">
    <location>
        <begin position="1"/>
        <end position="188"/>
    </location>
</feature>
<feature type="region of interest" description="Disordered" evidence="3">
    <location>
        <begin position="1"/>
        <end position="68"/>
    </location>
</feature>
<feature type="region of interest" description="Disordered" evidence="3">
    <location>
        <begin position="127"/>
        <end position="188"/>
    </location>
</feature>
<feature type="coiled-coil region" evidence="2">
    <location>
        <begin position="107"/>
        <end position="159"/>
    </location>
</feature>
<feature type="compositionally biased region" description="Low complexity" evidence="3">
    <location>
        <begin position="1"/>
        <end position="13"/>
    </location>
</feature>
<feature type="compositionally biased region" description="Basic and acidic residues" evidence="3">
    <location>
        <begin position="37"/>
        <end position="47"/>
    </location>
</feature>
<feature type="compositionally biased region" description="Basic and acidic residues" evidence="3">
    <location>
        <begin position="127"/>
        <end position="152"/>
    </location>
</feature>
<feature type="compositionally biased region" description="Basic residues" evidence="3">
    <location>
        <begin position="178"/>
        <end position="188"/>
    </location>
</feature>
<proteinExistence type="inferred from homology"/>
<comment type="function">
    <text evidence="1">Required for efficient assembly and nuclear export of the 60S ribosomal subunit.</text>
</comment>
<comment type="subunit">
    <text evidence="1">Component of the 66S pre-ribosomal particle.</text>
</comment>
<comment type="subcellular location">
    <subcellularLocation>
        <location evidence="1">Nucleus</location>
        <location evidence="1">Nucleolus</location>
    </subcellularLocation>
</comment>
<comment type="similarity">
    <text evidence="4">Belongs to the LOC1 family.</text>
</comment>
<comment type="sequence caution" evidence="4">
    <conflict type="erroneous gene model prediction">
        <sequence resource="EMBL-CDS" id="CBF70979"/>
    </conflict>
</comment>
<comment type="sequence caution" evidence="4">
    <conflict type="erroneous gene model prediction">
        <sequence resource="EMBL-CDS" id="EAA57896"/>
    </conflict>
</comment>